<organism>
    <name type="scientific">Saccharophagus degradans (strain 2-40 / ATCC 43961 / DSM 17024)</name>
    <dbReference type="NCBI Taxonomy" id="203122"/>
    <lineage>
        <taxon>Bacteria</taxon>
        <taxon>Pseudomonadati</taxon>
        <taxon>Pseudomonadota</taxon>
        <taxon>Gammaproteobacteria</taxon>
        <taxon>Cellvibrionales</taxon>
        <taxon>Cellvibrionaceae</taxon>
        <taxon>Saccharophagus</taxon>
    </lineage>
</organism>
<sequence length="738" mass="81426">MEPLFPKRLLSIAVLCVASATAQADTGMNPDNDYWWPNRLSLEPLRDSSLSADPRGANFDYNEALKDLDVEALKKDLKQVMTASQDWWPADYGHYGPFFIRLSWHAAGTYRMIDGRGGADGGMQRFAPLNSWPDNASLDKARRLLQPIKQKYGNNLSWSDLLVLAGTIGMEDMGFPIVGFAFGRDDEWEPEEVNWGPEGQWLTDRRHSGDRKLDKPFGATEMGLIYVNPEGPHGNPDPIAAAHDIRQAFGRMGMSDEETVALIAGGHTFGKAHGAHKPSDCVGADPEAASMEEQGLGWTNKCGKGNAEDTVTSGLEGAWTVSPAEWTHNFLQNLYAFEWELTTSPAGAKQWVPKGGAATNMVPDAHDSSKRHAPIMLTTDLALKEDPAYRKITQRWLEDPEEFTRAFARAWFKLTHRDMGPVSRYKGELVPSDTFVWQDPVPVADYKQIGERDVKKLKAAILDSGLSTSDLVKTAWASAASFRTTDMRGGANGARIRLAPQKDWAVNQPQDLQRVLKVLEGVQREFNKKSRKTKVSLADVIVLGGAAAIEQAAKKAGHKVEVPFFPGRTDASQEMTDVSTFAWLEPKSDGFRNFHAEGYKRNPAEALVERAALLGLTAPEMTALVGGLRVLQANADGSQHGVFTDNPGSLTNDFFVNLVDMSTVWKKSDTEAGLYKGLDRNSGKVKWTATSADLIFGSNSELRAIAEYYSQSDSQKTFVQDFINAWSKVMTADRFDLK</sequence>
<reference key="1">
    <citation type="journal article" date="2008" name="PLoS Genet.">
        <title>Complete genome sequence of the complex carbohydrate-degrading marine bacterium, Saccharophagus degradans strain 2-40 T.</title>
        <authorList>
            <person name="Weiner R.M."/>
            <person name="Taylor L.E. II"/>
            <person name="Henrissat B."/>
            <person name="Hauser L."/>
            <person name="Land M."/>
            <person name="Coutinho P.M."/>
            <person name="Rancurel C."/>
            <person name="Saunders E.H."/>
            <person name="Longmire A.G."/>
            <person name="Zhang H."/>
            <person name="Bayer E.A."/>
            <person name="Gilbert H.J."/>
            <person name="Larimer F."/>
            <person name="Zhulin I.B."/>
            <person name="Ekborg N.A."/>
            <person name="Lamed R."/>
            <person name="Richardson P.M."/>
            <person name="Borovok I."/>
            <person name="Hutcheson S."/>
        </authorList>
    </citation>
    <scope>NUCLEOTIDE SEQUENCE [LARGE SCALE GENOMIC DNA]</scope>
    <source>
        <strain>2-40 / ATCC 43961 / DSM 17024</strain>
    </source>
</reference>
<gene>
    <name evidence="1" type="primary">katG</name>
    <name type="ordered locus">Sde_3888</name>
</gene>
<dbReference type="EC" id="1.11.1.21" evidence="1"/>
<dbReference type="EMBL" id="CP000282">
    <property type="protein sequence ID" value="ABD83143.1"/>
    <property type="molecule type" value="Genomic_DNA"/>
</dbReference>
<dbReference type="RefSeq" id="WP_011470358.1">
    <property type="nucleotide sequence ID" value="NC_007912.1"/>
</dbReference>
<dbReference type="SMR" id="Q21DT6"/>
<dbReference type="STRING" id="203122.Sde_3888"/>
<dbReference type="PeroxiBase" id="2699">
    <property type="entry name" value="SdCP01"/>
</dbReference>
<dbReference type="GeneID" id="98615485"/>
<dbReference type="KEGG" id="sde:Sde_3888"/>
<dbReference type="eggNOG" id="COG0376">
    <property type="taxonomic scope" value="Bacteria"/>
</dbReference>
<dbReference type="HOGENOM" id="CLU_025424_2_0_6"/>
<dbReference type="OrthoDB" id="9759743at2"/>
<dbReference type="Proteomes" id="UP000001947">
    <property type="component" value="Chromosome"/>
</dbReference>
<dbReference type="GO" id="GO:0005829">
    <property type="term" value="C:cytosol"/>
    <property type="evidence" value="ECO:0007669"/>
    <property type="project" value="TreeGrafter"/>
</dbReference>
<dbReference type="GO" id="GO:0004096">
    <property type="term" value="F:catalase activity"/>
    <property type="evidence" value="ECO:0007669"/>
    <property type="project" value="UniProtKB-UniRule"/>
</dbReference>
<dbReference type="GO" id="GO:0020037">
    <property type="term" value="F:heme binding"/>
    <property type="evidence" value="ECO:0007669"/>
    <property type="project" value="InterPro"/>
</dbReference>
<dbReference type="GO" id="GO:0046872">
    <property type="term" value="F:metal ion binding"/>
    <property type="evidence" value="ECO:0007669"/>
    <property type="project" value="UniProtKB-KW"/>
</dbReference>
<dbReference type="GO" id="GO:0070301">
    <property type="term" value="P:cellular response to hydrogen peroxide"/>
    <property type="evidence" value="ECO:0007669"/>
    <property type="project" value="TreeGrafter"/>
</dbReference>
<dbReference type="GO" id="GO:0042744">
    <property type="term" value="P:hydrogen peroxide catabolic process"/>
    <property type="evidence" value="ECO:0007669"/>
    <property type="project" value="UniProtKB-KW"/>
</dbReference>
<dbReference type="CDD" id="cd00649">
    <property type="entry name" value="catalase_peroxidase_1"/>
    <property type="match status" value="1"/>
</dbReference>
<dbReference type="CDD" id="cd08200">
    <property type="entry name" value="catalase_peroxidase_2"/>
    <property type="match status" value="1"/>
</dbReference>
<dbReference type="FunFam" id="1.10.420.10:FF:000002">
    <property type="entry name" value="Catalase-peroxidase"/>
    <property type="match status" value="1"/>
</dbReference>
<dbReference type="FunFam" id="1.10.420.10:FF:000004">
    <property type="entry name" value="Catalase-peroxidase"/>
    <property type="match status" value="1"/>
</dbReference>
<dbReference type="Gene3D" id="1.10.520.10">
    <property type="match status" value="2"/>
</dbReference>
<dbReference type="Gene3D" id="1.10.420.10">
    <property type="entry name" value="Peroxidase, domain 2"/>
    <property type="match status" value="2"/>
</dbReference>
<dbReference type="HAMAP" id="MF_01961">
    <property type="entry name" value="Catal_peroxid"/>
    <property type="match status" value="1"/>
</dbReference>
<dbReference type="InterPro" id="IPR000763">
    <property type="entry name" value="Catalase_peroxidase"/>
</dbReference>
<dbReference type="InterPro" id="IPR002016">
    <property type="entry name" value="Haem_peroxidase"/>
</dbReference>
<dbReference type="InterPro" id="IPR010255">
    <property type="entry name" value="Haem_peroxidase_sf"/>
</dbReference>
<dbReference type="InterPro" id="IPR019794">
    <property type="entry name" value="Peroxidases_AS"/>
</dbReference>
<dbReference type="InterPro" id="IPR019793">
    <property type="entry name" value="Peroxidases_heam-ligand_BS"/>
</dbReference>
<dbReference type="NCBIfam" id="TIGR00198">
    <property type="entry name" value="cat_per_HPI"/>
    <property type="match status" value="1"/>
</dbReference>
<dbReference type="NCBIfam" id="NF011635">
    <property type="entry name" value="PRK15061.1"/>
    <property type="match status" value="1"/>
</dbReference>
<dbReference type="PANTHER" id="PTHR30555:SF0">
    <property type="entry name" value="CATALASE-PEROXIDASE"/>
    <property type="match status" value="1"/>
</dbReference>
<dbReference type="PANTHER" id="PTHR30555">
    <property type="entry name" value="HYDROPEROXIDASE I, BIFUNCTIONAL CATALASE-PEROXIDASE"/>
    <property type="match status" value="1"/>
</dbReference>
<dbReference type="Pfam" id="PF00141">
    <property type="entry name" value="peroxidase"/>
    <property type="match status" value="2"/>
</dbReference>
<dbReference type="PRINTS" id="PR00460">
    <property type="entry name" value="BPEROXIDASE"/>
</dbReference>
<dbReference type="PRINTS" id="PR00458">
    <property type="entry name" value="PEROXIDASE"/>
</dbReference>
<dbReference type="SUPFAM" id="SSF48113">
    <property type="entry name" value="Heme-dependent peroxidases"/>
    <property type="match status" value="2"/>
</dbReference>
<dbReference type="PROSITE" id="PS00435">
    <property type="entry name" value="PEROXIDASE_1"/>
    <property type="match status" value="1"/>
</dbReference>
<dbReference type="PROSITE" id="PS00436">
    <property type="entry name" value="PEROXIDASE_2"/>
    <property type="match status" value="1"/>
</dbReference>
<dbReference type="PROSITE" id="PS50873">
    <property type="entry name" value="PEROXIDASE_4"/>
    <property type="match status" value="1"/>
</dbReference>
<protein>
    <recommendedName>
        <fullName evidence="1">Catalase-peroxidase</fullName>
        <shortName evidence="1">CP</shortName>
        <ecNumber evidence="1">1.11.1.21</ecNumber>
    </recommendedName>
    <alternativeName>
        <fullName evidence="1">Peroxidase/catalase</fullName>
    </alternativeName>
</protein>
<keyword id="KW-0349">Heme</keyword>
<keyword id="KW-0376">Hydrogen peroxide</keyword>
<keyword id="KW-0408">Iron</keyword>
<keyword id="KW-0479">Metal-binding</keyword>
<keyword id="KW-0560">Oxidoreductase</keyword>
<keyword id="KW-0575">Peroxidase</keyword>
<keyword id="KW-1185">Reference proteome</keyword>
<keyword id="KW-0732">Signal</keyword>
<accession>Q21DT6</accession>
<comment type="function">
    <text evidence="1">Bifunctional enzyme with both catalase and broad-spectrum peroxidase activity.</text>
</comment>
<comment type="catalytic activity">
    <reaction evidence="1">
        <text>H2O2 + AH2 = A + 2 H2O</text>
        <dbReference type="Rhea" id="RHEA:30275"/>
        <dbReference type="ChEBI" id="CHEBI:13193"/>
        <dbReference type="ChEBI" id="CHEBI:15377"/>
        <dbReference type="ChEBI" id="CHEBI:16240"/>
        <dbReference type="ChEBI" id="CHEBI:17499"/>
        <dbReference type="EC" id="1.11.1.21"/>
    </reaction>
</comment>
<comment type="catalytic activity">
    <reaction evidence="1">
        <text>2 H2O2 = O2 + 2 H2O</text>
        <dbReference type="Rhea" id="RHEA:20309"/>
        <dbReference type="ChEBI" id="CHEBI:15377"/>
        <dbReference type="ChEBI" id="CHEBI:15379"/>
        <dbReference type="ChEBI" id="CHEBI:16240"/>
        <dbReference type="EC" id="1.11.1.21"/>
    </reaction>
</comment>
<comment type="cofactor">
    <cofactor evidence="1">
        <name>heme b</name>
        <dbReference type="ChEBI" id="CHEBI:60344"/>
    </cofactor>
    <text evidence="1">Binds 1 heme b (iron(II)-protoporphyrin IX) group per dimer.</text>
</comment>
<comment type="subunit">
    <text evidence="1">Homodimer or homotetramer.</text>
</comment>
<comment type="PTM">
    <text evidence="1">Formation of the three residue Trp-Tyr-Met cross-link is important for the catalase, but not the peroxidase activity of the enzyme.</text>
</comment>
<comment type="similarity">
    <text evidence="1">Belongs to the peroxidase family. Peroxidase/catalase subfamily.</text>
</comment>
<name>KATG_SACD2</name>
<feature type="signal peptide" evidence="1">
    <location>
        <begin position="1"/>
        <end position="24"/>
    </location>
</feature>
<feature type="chain" id="PRO_0000354899" description="Catalase-peroxidase">
    <location>
        <begin position="25"/>
        <end position="738"/>
    </location>
</feature>
<feature type="region of interest" description="Disordered" evidence="2">
    <location>
        <begin position="191"/>
        <end position="213"/>
    </location>
</feature>
<feature type="compositionally biased region" description="Basic and acidic residues" evidence="2">
    <location>
        <begin position="203"/>
        <end position="213"/>
    </location>
</feature>
<feature type="active site" description="Proton acceptor" evidence="1">
    <location>
        <position position="105"/>
    </location>
</feature>
<feature type="binding site" description="axial binding residue" evidence="1">
    <location>
        <position position="267"/>
    </location>
    <ligand>
        <name>heme b</name>
        <dbReference type="ChEBI" id="CHEBI:60344"/>
    </ligand>
    <ligandPart>
        <name>Fe</name>
        <dbReference type="ChEBI" id="CHEBI:18248"/>
    </ligandPart>
</feature>
<feature type="site" description="Transition state stabilizer" evidence="1">
    <location>
        <position position="101"/>
    </location>
</feature>
<feature type="cross-link" description="Tryptophyl-tyrosyl-methioninium (Trp-Tyr) (with M-252)" evidence="1">
    <location>
        <begin position="104"/>
        <end position="226"/>
    </location>
</feature>
<feature type="cross-link" description="Tryptophyl-tyrosyl-methioninium (Tyr-Met) (with W-104)" evidence="1">
    <location>
        <begin position="226"/>
        <end position="252"/>
    </location>
</feature>
<proteinExistence type="inferred from homology"/>
<evidence type="ECO:0000255" key="1">
    <source>
        <dbReference type="HAMAP-Rule" id="MF_01961"/>
    </source>
</evidence>
<evidence type="ECO:0000256" key="2">
    <source>
        <dbReference type="SAM" id="MobiDB-lite"/>
    </source>
</evidence>